<proteinExistence type="evidence at protein level"/>
<keyword id="KW-0002">3D-structure</keyword>
<keyword id="KW-0025">Alternative splicing</keyword>
<keyword id="KW-1003">Cell membrane</keyword>
<keyword id="KW-0160">Chromosomal rearrangement</keyword>
<keyword id="KW-0225">Disease variant</keyword>
<keyword id="KW-1015">Disulfide bond</keyword>
<keyword id="KW-0325">Glycoprotein</keyword>
<keyword id="KW-0393">Immunoglobulin domain</keyword>
<keyword id="KW-0472">Membrane</keyword>
<keyword id="KW-1267">Proteomics identification</keyword>
<keyword id="KW-1185">Reference proteome</keyword>
<keyword id="KW-0677">Repeat</keyword>
<keyword id="KW-0964">Secreted</keyword>
<keyword id="KW-0732">Signal</keyword>
<keyword id="KW-0812">Transmembrane</keyword>
<keyword id="KW-1133">Transmembrane helix</keyword>
<protein>
    <recommendedName>
        <fullName>Kin of IRRE-like protein 3</fullName>
    </recommendedName>
    <alternativeName>
        <fullName>Kin of irregular chiasm-like protein 3</fullName>
    </alternativeName>
    <alternativeName>
        <fullName evidence="10">Nephrin-like protein 2</fullName>
    </alternativeName>
    <component>
        <recommendedName>
            <fullName evidence="1">Processed kin of IRRE-like protein 3</fullName>
        </recommendedName>
    </component>
</protein>
<dbReference type="EMBL" id="AF480410">
    <property type="protein sequence ID" value="AAN73042.1"/>
    <property type="molecule type" value="mRNA"/>
</dbReference>
<dbReference type="EMBL" id="AB058770">
    <property type="protein sequence ID" value="BAB47496.1"/>
    <property type="status" value="ALT_INIT"/>
    <property type="molecule type" value="mRNA"/>
</dbReference>
<dbReference type="EMBL" id="AY358743">
    <property type="protein sequence ID" value="AAQ89103.1"/>
    <property type="molecule type" value="mRNA"/>
</dbReference>
<dbReference type="EMBL" id="AY358760">
    <property type="protein sequence ID" value="AAQ89120.1"/>
    <property type="status" value="ALT_INIT"/>
    <property type="molecule type" value="mRNA"/>
</dbReference>
<dbReference type="EMBL" id="BC101775">
    <property type="protein sequence ID" value="AAI01776.1"/>
    <property type="molecule type" value="mRNA"/>
</dbReference>
<dbReference type="EMBL" id="BC101801">
    <property type="protein sequence ID" value="AAI01802.1"/>
    <property type="molecule type" value="mRNA"/>
</dbReference>
<dbReference type="CCDS" id="CCDS53723.1">
    <molecule id="Q8IZU9-1"/>
</dbReference>
<dbReference type="CCDS" id="CCDS55796.1">
    <molecule id="Q8IZU9-2"/>
</dbReference>
<dbReference type="RefSeq" id="NP_001155179.1">
    <molecule id="Q8IZU9-2"/>
    <property type="nucleotide sequence ID" value="NM_001161707.1"/>
</dbReference>
<dbReference type="RefSeq" id="NP_115920.1">
    <molecule id="Q8IZU9-1"/>
    <property type="nucleotide sequence ID" value="NM_032531.4"/>
</dbReference>
<dbReference type="RefSeq" id="XP_011541333.1">
    <property type="nucleotide sequence ID" value="XM_011543031.2"/>
</dbReference>
<dbReference type="RefSeq" id="XP_016873909.1">
    <property type="nucleotide sequence ID" value="XM_017018420.1"/>
</dbReference>
<dbReference type="RefSeq" id="XP_054226174.1">
    <molecule id="Q8IZU9-1"/>
    <property type="nucleotide sequence ID" value="XM_054370199.1"/>
</dbReference>
<dbReference type="RefSeq" id="XP_054226175.1">
    <molecule id="Q8IZU9-1"/>
    <property type="nucleotide sequence ID" value="XM_054370200.1"/>
</dbReference>
<dbReference type="PDB" id="2CRY">
    <property type="method" value="NMR"/>
    <property type="chains" value="A=413-521"/>
</dbReference>
<dbReference type="PDBsum" id="2CRY"/>
<dbReference type="SMR" id="Q8IZU9"/>
<dbReference type="BioGRID" id="124153">
    <property type="interactions" value="1"/>
</dbReference>
<dbReference type="FunCoup" id="Q8IZU9">
    <property type="interactions" value="286"/>
</dbReference>
<dbReference type="IntAct" id="Q8IZU9">
    <property type="interactions" value="16"/>
</dbReference>
<dbReference type="MINT" id="Q8IZU9"/>
<dbReference type="STRING" id="9606.ENSP00000435466"/>
<dbReference type="GlyCosmos" id="Q8IZU9">
    <property type="glycosylation" value="4 sites, No reported glycans"/>
</dbReference>
<dbReference type="GlyGen" id="Q8IZU9">
    <property type="glycosylation" value="4 sites"/>
</dbReference>
<dbReference type="iPTMnet" id="Q8IZU9"/>
<dbReference type="PhosphoSitePlus" id="Q8IZU9"/>
<dbReference type="BioMuta" id="KIRREL3"/>
<dbReference type="DMDM" id="55736065"/>
<dbReference type="jPOST" id="Q8IZU9"/>
<dbReference type="MassIVE" id="Q8IZU9"/>
<dbReference type="PaxDb" id="9606-ENSP00000435466"/>
<dbReference type="PeptideAtlas" id="Q8IZU9"/>
<dbReference type="ProteomicsDB" id="71433">
    <molecule id="Q8IZU9-1"/>
</dbReference>
<dbReference type="ProteomicsDB" id="71434">
    <molecule id="Q8IZU9-2"/>
</dbReference>
<dbReference type="Antibodypedia" id="33010">
    <property type="antibodies" value="136 antibodies from 30 providers"/>
</dbReference>
<dbReference type="DNASU" id="84623"/>
<dbReference type="Ensembl" id="ENST00000525144.7">
    <molecule id="Q8IZU9-1"/>
    <property type="protein sequence ID" value="ENSP00000435466.2"/>
    <property type="gene ID" value="ENSG00000149571.12"/>
</dbReference>
<dbReference type="Ensembl" id="ENST00000525704.2">
    <molecule id="Q8IZU9-2"/>
    <property type="protein sequence ID" value="ENSP00000435094.2"/>
    <property type="gene ID" value="ENSG00000149571.12"/>
</dbReference>
<dbReference type="GeneID" id="84623"/>
<dbReference type="KEGG" id="hsa:84623"/>
<dbReference type="MANE-Select" id="ENST00000525144.7">
    <property type="protein sequence ID" value="ENSP00000435466.2"/>
    <property type="RefSeq nucleotide sequence ID" value="NM_032531.4"/>
    <property type="RefSeq protein sequence ID" value="NP_115920.1"/>
</dbReference>
<dbReference type="UCSC" id="uc001qea.4">
    <molecule id="Q8IZU9-1"/>
    <property type="organism name" value="human"/>
</dbReference>
<dbReference type="AGR" id="HGNC:23204"/>
<dbReference type="CTD" id="84623"/>
<dbReference type="DisGeNET" id="84623"/>
<dbReference type="GeneCards" id="KIRREL3"/>
<dbReference type="HGNC" id="HGNC:23204">
    <property type="gene designation" value="KIRREL3"/>
</dbReference>
<dbReference type="HPA" id="ENSG00000149571">
    <property type="expression patterns" value="Tissue enriched (brain)"/>
</dbReference>
<dbReference type="MalaCards" id="KIRREL3"/>
<dbReference type="MIM" id="607761">
    <property type="type" value="gene"/>
</dbReference>
<dbReference type="neXtProt" id="NX_Q8IZU9"/>
<dbReference type="OpenTargets" id="ENSG00000149571"/>
<dbReference type="Orphanet" id="178469">
    <property type="disease" value="Autosomal dominant non-syndromic intellectual disability"/>
</dbReference>
<dbReference type="PharmGKB" id="PA134958283"/>
<dbReference type="VEuPathDB" id="HostDB:ENSG00000149571"/>
<dbReference type="eggNOG" id="KOG3510">
    <property type="taxonomic scope" value="Eukaryota"/>
</dbReference>
<dbReference type="GeneTree" id="ENSGT00940000157126"/>
<dbReference type="HOGENOM" id="CLU_013520_1_0_1"/>
<dbReference type="InParanoid" id="Q8IZU9"/>
<dbReference type="OMA" id="EDHMASI"/>
<dbReference type="OrthoDB" id="6413693at2759"/>
<dbReference type="PAN-GO" id="Q8IZU9">
    <property type="GO annotations" value="5 GO annotations based on evolutionary models"/>
</dbReference>
<dbReference type="PhylomeDB" id="Q8IZU9"/>
<dbReference type="TreeFam" id="TF327139"/>
<dbReference type="PathwayCommons" id="Q8IZU9"/>
<dbReference type="Reactome" id="R-HSA-373753">
    <property type="pathway name" value="Nephrin family interactions"/>
</dbReference>
<dbReference type="SignaLink" id="Q8IZU9"/>
<dbReference type="SIGNOR" id="Q8IZU9"/>
<dbReference type="BioGRID-ORCS" id="84623">
    <property type="hits" value="8 hits in 1138 CRISPR screens"/>
</dbReference>
<dbReference type="ChiTaRS" id="KIRREL3">
    <property type="organism name" value="human"/>
</dbReference>
<dbReference type="EvolutionaryTrace" id="Q8IZU9"/>
<dbReference type="GeneWiki" id="KIRREL3"/>
<dbReference type="GenomeRNAi" id="84623"/>
<dbReference type="Pharos" id="Q8IZU9">
    <property type="development level" value="Tbio"/>
</dbReference>
<dbReference type="PRO" id="PR:Q8IZU9"/>
<dbReference type="Proteomes" id="UP000005640">
    <property type="component" value="Chromosome 11"/>
</dbReference>
<dbReference type="RNAct" id="Q8IZU9">
    <property type="molecule type" value="protein"/>
</dbReference>
<dbReference type="Bgee" id="ENSG00000149571">
    <property type="expression patterns" value="Expressed in middle temporal gyrus and 129 other cell types or tissues"/>
</dbReference>
<dbReference type="ExpressionAtlas" id="Q8IZU9">
    <property type="expression patterns" value="baseline and differential"/>
</dbReference>
<dbReference type="GO" id="GO:0030424">
    <property type="term" value="C:axon"/>
    <property type="evidence" value="ECO:0000250"/>
    <property type="project" value="UniProtKB"/>
</dbReference>
<dbReference type="GO" id="GO:0005911">
    <property type="term" value="C:cell-cell junction"/>
    <property type="evidence" value="ECO:0000318"/>
    <property type="project" value="GO_Central"/>
</dbReference>
<dbReference type="GO" id="GO:0030425">
    <property type="term" value="C:dendrite"/>
    <property type="evidence" value="ECO:0000250"/>
    <property type="project" value="UniProtKB"/>
</dbReference>
<dbReference type="GO" id="GO:0043198">
    <property type="term" value="C:dendritic shaft"/>
    <property type="evidence" value="ECO:0007669"/>
    <property type="project" value="Ensembl"/>
</dbReference>
<dbReference type="GO" id="GO:0005576">
    <property type="term" value="C:extracellular region"/>
    <property type="evidence" value="ECO:0000250"/>
    <property type="project" value="UniProtKB"/>
</dbReference>
<dbReference type="GO" id="GO:0016020">
    <property type="term" value="C:membrane"/>
    <property type="evidence" value="ECO:0000250"/>
    <property type="project" value="UniProtKB"/>
</dbReference>
<dbReference type="GO" id="GO:0005886">
    <property type="term" value="C:plasma membrane"/>
    <property type="evidence" value="ECO:0000318"/>
    <property type="project" value="GO_Central"/>
</dbReference>
<dbReference type="GO" id="GO:0008021">
    <property type="term" value="C:synaptic vesicle"/>
    <property type="evidence" value="ECO:0000314"/>
    <property type="project" value="CACAO"/>
</dbReference>
<dbReference type="GO" id="GO:0050839">
    <property type="term" value="F:cell adhesion molecule binding"/>
    <property type="evidence" value="ECO:0000318"/>
    <property type="project" value="GO_Central"/>
</dbReference>
<dbReference type="GO" id="GO:0098609">
    <property type="term" value="P:cell-cell adhesion"/>
    <property type="evidence" value="ECO:0000318"/>
    <property type="project" value="GO_Central"/>
</dbReference>
<dbReference type="GO" id="GO:0072102">
    <property type="term" value="P:glomerulus morphogenesis"/>
    <property type="evidence" value="ECO:0007669"/>
    <property type="project" value="Ensembl"/>
</dbReference>
<dbReference type="GO" id="GO:0030097">
    <property type="term" value="P:hemopoiesis"/>
    <property type="evidence" value="ECO:0000250"/>
    <property type="project" value="UniProtKB"/>
</dbReference>
<dbReference type="GO" id="GO:0021766">
    <property type="term" value="P:hippocampus development"/>
    <property type="evidence" value="ECO:0000250"/>
    <property type="project" value="UniProtKB"/>
</dbReference>
<dbReference type="GO" id="GO:0007156">
    <property type="term" value="P:homophilic cell adhesion via plasma membrane adhesion molecules"/>
    <property type="evidence" value="ECO:0000250"/>
    <property type="project" value="UniProtKB"/>
</dbReference>
<dbReference type="GO" id="GO:0002121">
    <property type="term" value="P:inter-male aggressive behavior"/>
    <property type="evidence" value="ECO:0007669"/>
    <property type="project" value="Ensembl"/>
</dbReference>
<dbReference type="GO" id="GO:0001764">
    <property type="term" value="P:neuron migration"/>
    <property type="evidence" value="ECO:0007669"/>
    <property type="project" value="Ensembl"/>
</dbReference>
<dbReference type="GO" id="GO:0048812">
    <property type="term" value="P:neuron projection morphogenesis"/>
    <property type="evidence" value="ECO:0007669"/>
    <property type="project" value="Ensembl"/>
</dbReference>
<dbReference type="GO" id="GO:0021740">
    <property type="term" value="P:principal sensory nucleus of trigeminal nerve development"/>
    <property type="evidence" value="ECO:0007669"/>
    <property type="project" value="Ensembl"/>
</dbReference>
<dbReference type="GO" id="GO:0007416">
    <property type="term" value="P:synapse assembly"/>
    <property type="evidence" value="ECO:0000250"/>
    <property type="project" value="UniProtKB"/>
</dbReference>
<dbReference type="CDD" id="cd05759">
    <property type="entry name" value="IgI_2_KIRREL3-like"/>
    <property type="match status" value="1"/>
</dbReference>
<dbReference type="CDD" id="cd05898">
    <property type="entry name" value="IgI_5_KIRREL3"/>
    <property type="match status" value="1"/>
</dbReference>
<dbReference type="FunFam" id="2.60.40.10:FF:000077">
    <property type="entry name" value="Kirre like nephrin family adhesion molecule 3"/>
    <property type="match status" value="1"/>
</dbReference>
<dbReference type="FunFam" id="2.60.40.10:FF:000094">
    <property type="entry name" value="Kirre like nephrin family adhesion molecule 3"/>
    <property type="match status" value="1"/>
</dbReference>
<dbReference type="FunFam" id="2.60.40.10:FF:000103">
    <property type="entry name" value="Kirre like nephrin family adhesion molecule 3"/>
    <property type="match status" value="1"/>
</dbReference>
<dbReference type="FunFam" id="2.60.40.10:FF:000170">
    <property type="entry name" value="Kirre like nephrin family adhesion molecule 3"/>
    <property type="match status" value="1"/>
</dbReference>
<dbReference type="FunFam" id="2.60.40.10:FF:000371">
    <property type="entry name" value="Kirre like nephrin family adhesion molecule 3"/>
    <property type="match status" value="1"/>
</dbReference>
<dbReference type="Gene3D" id="2.60.40.10">
    <property type="entry name" value="Immunoglobulins"/>
    <property type="match status" value="5"/>
</dbReference>
<dbReference type="InterPro" id="IPR013162">
    <property type="entry name" value="CD80_C2-set"/>
</dbReference>
<dbReference type="InterPro" id="IPR051275">
    <property type="entry name" value="Cell_adhesion_signaling"/>
</dbReference>
<dbReference type="InterPro" id="IPR007110">
    <property type="entry name" value="Ig-like_dom"/>
</dbReference>
<dbReference type="InterPro" id="IPR036179">
    <property type="entry name" value="Ig-like_dom_sf"/>
</dbReference>
<dbReference type="InterPro" id="IPR013783">
    <property type="entry name" value="Ig-like_fold"/>
</dbReference>
<dbReference type="InterPro" id="IPR013098">
    <property type="entry name" value="Ig_I-set"/>
</dbReference>
<dbReference type="InterPro" id="IPR003599">
    <property type="entry name" value="Ig_sub"/>
</dbReference>
<dbReference type="InterPro" id="IPR003598">
    <property type="entry name" value="Ig_sub2"/>
</dbReference>
<dbReference type="PANTHER" id="PTHR11640:SF49">
    <property type="entry name" value="KIN OF IRRE-LIKE PROTEIN 3"/>
    <property type="match status" value="1"/>
</dbReference>
<dbReference type="PANTHER" id="PTHR11640">
    <property type="entry name" value="NEPHRIN"/>
    <property type="match status" value="1"/>
</dbReference>
<dbReference type="Pfam" id="PF08205">
    <property type="entry name" value="C2-set_2"/>
    <property type="match status" value="1"/>
</dbReference>
<dbReference type="Pfam" id="PF07679">
    <property type="entry name" value="I-set"/>
    <property type="match status" value="2"/>
</dbReference>
<dbReference type="Pfam" id="PF13927">
    <property type="entry name" value="Ig_3"/>
    <property type="match status" value="1"/>
</dbReference>
<dbReference type="SMART" id="SM00409">
    <property type="entry name" value="IG"/>
    <property type="match status" value="4"/>
</dbReference>
<dbReference type="SMART" id="SM00408">
    <property type="entry name" value="IGc2"/>
    <property type="match status" value="3"/>
</dbReference>
<dbReference type="SUPFAM" id="SSF48726">
    <property type="entry name" value="Immunoglobulin"/>
    <property type="match status" value="5"/>
</dbReference>
<dbReference type="PROSITE" id="PS50835">
    <property type="entry name" value="IG_LIKE"/>
    <property type="match status" value="5"/>
</dbReference>
<feature type="signal peptide" evidence="2">
    <location>
        <begin position="1"/>
        <end position="21"/>
    </location>
</feature>
<feature type="chain" id="PRO_0000015098" description="Kin of IRRE-like protein 3">
    <location>
        <begin position="22"/>
        <end position="778"/>
    </location>
</feature>
<feature type="chain" id="PRO_0000435799" description="Processed kin of IRRE-like protein 3" evidence="1">
    <location>
        <begin position="22"/>
        <end status="unknown"/>
    </location>
</feature>
<feature type="topological domain" description="Extracellular" evidence="2">
    <location>
        <begin position="22"/>
        <end position="535"/>
    </location>
</feature>
<feature type="transmembrane region" description="Helical" evidence="2">
    <location>
        <begin position="536"/>
        <end position="556"/>
    </location>
</feature>
<feature type="topological domain" description="Cytoplasmic" evidence="2">
    <location>
        <begin position="557"/>
        <end position="778"/>
    </location>
</feature>
<feature type="domain" description="Ig-like C2-type 1">
    <location>
        <begin position="48"/>
        <end position="142"/>
    </location>
</feature>
<feature type="domain" description="Ig-like C2-type 2">
    <location>
        <begin position="147"/>
        <end position="243"/>
    </location>
</feature>
<feature type="domain" description="Ig-like C2-type 3">
    <location>
        <begin position="249"/>
        <end position="330"/>
    </location>
</feature>
<feature type="domain" description="Ig-like C2-type 4">
    <location>
        <begin position="335"/>
        <end position="415"/>
    </location>
</feature>
<feature type="domain" description="Ig-like C2-type 5">
    <location>
        <begin position="419"/>
        <end position="515"/>
    </location>
</feature>
<feature type="region of interest" description="Disordered" evidence="4">
    <location>
        <begin position="727"/>
        <end position="778"/>
    </location>
</feature>
<feature type="compositionally biased region" description="Polar residues" evidence="4">
    <location>
        <begin position="727"/>
        <end position="736"/>
    </location>
</feature>
<feature type="compositionally biased region" description="Low complexity" evidence="4">
    <location>
        <begin position="748"/>
        <end position="762"/>
    </location>
</feature>
<feature type="glycosylation site" description="N-linked (GlcNAc...) asparagine" evidence="2">
    <location>
        <position position="167"/>
    </location>
</feature>
<feature type="glycosylation site" description="N-linked (GlcNAc...) asparagine" evidence="2">
    <location>
        <position position="253"/>
    </location>
</feature>
<feature type="glycosylation site" description="N-linked (GlcNAc...) asparagine" evidence="2">
    <location>
        <position position="324"/>
    </location>
</feature>
<feature type="glycosylation site" description="N-linked (GlcNAc...) asparagine" evidence="2">
    <location>
        <position position="498"/>
    </location>
</feature>
<feature type="disulfide bond" evidence="3">
    <location>
        <begin position="69"/>
        <end position="127"/>
    </location>
</feature>
<feature type="disulfide bond" evidence="3">
    <location>
        <begin position="170"/>
        <end position="227"/>
    </location>
</feature>
<feature type="disulfide bond" evidence="3">
    <location>
        <begin position="271"/>
        <end position="314"/>
    </location>
</feature>
<feature type="disulfide bond" evidence="3">
    <location>
        <begin position="356"/>
        <end position="398"/>
    </location>
</feature>
<feature type="disulfide bond" evidence="3">
    <location>
        <begin position="440"/>
        <end position="499"/>
    </location>
</feature>
<feature type="splice variant" id="VSP_011799" description="In isoform 2." evidence="11">
    <original>NLKGVVSAKNDIRVEIVHKEPASGREGEEHSTIKQ</original>
    <variation>STGGRSGISGRGTEKKARLRLPRRASKQECNEQGS</variation>
    <location>
        <begin position="566"/>
        <end position="600"/>
    </location>
</feature>
<feature type="splice variant" id="VSP_011800" description="In isoform 2." evidence="11">
    <location>
        <begin position="601"/>
        <end position="778"/>
    </location>
</feature>
<feature type="sequence variant" id="VAR_054828" description="Found in a patient with intellectual disability; uncertain significance; dbSNP:rs119462978." evidence="6">
    <original>R</original>
    <variation>W</variation>
    <location>
        <position position="40"/>
    </location>
</feature>
<feature type="sequence variant" id="VAR_054829" description="Found in patients with intellectual disability; uncertain significance; dbSNP:rs114378922." evidence="6">
    <original>R</original>
    <variation>Q</variation>
    <location>
        <position position="336"/>
    </location>
</feature>
<feature type="sequence variant" id="VAR_054830" description="Found in a patient with intellectual disability; uncertain significance; dbSNP:rs119462980." evidence="6">
    <original>V</original>
    <variation>F</variation>
    <location>
        <position position="731"/>
    </location>
</feature>
<feature type="strand" evidence="15">
    <location>
        <begin position="422"/>
        <end position="425"/>
    </location>
</feature>
<feature type="strand" evidence="15">
    <location>
        <begin position="440"/>
        <end position="442"/>
    </location>
</feature>
<feature type="strand" evidence="15">
    <location>
        <begin position="449"/>
        <end position="457"/>
    </location>
</feature>
<feature type="strand" evidence="15">
    <location>
        <begin position="462"/>
        <end position="465"/>
    </location>
</feature>
<feature type="strand" evidence="15">
    <location>
        <begin position="468"/>
        <end position="475"/>
    </location>
</feature>
<feature type="strand" evidence="15">
    <location>
        <begin position="478"/>
        <end position="484"/>
    </location>
</feature>
<feature type="helix" evidence="15">
    <location>
        <begin position="490"/>
        <end position="494"/>
    </location>
</feature>
<feature type="strand" evidence="15">
    <location>
        <begin position="497"/>
        <end position="502"/>
    </location>
</feature>
<feature type="strand" evidence="15">
    <location>
        <begin position="507"/>
        <end position="512"/>
    </location>
</feature>
<evidence type="ECO:0000250" key="1">
    <source>
        <dbReference type="UniProtKB" id="Q8BR86"/>
    </source>
</evidence>
<evidence type="ECO:0000255" key="2"/>
<evidence type="ECO:0000255" key="3">
    <source>
        <dbReference type="PROSITE-ProRule" id="PRU00114"/>
    </source>
</evidence>
<evidence type="ECO:0000256" key="4">
    <source>
        <dbReference type="SAM" id="MobiDB-lite"/>
    </source>
</evidence>
<evidence type="ECO:0000269" key="5">
    <source>
    </source>
</evidence>
<evidence type="ECO:0000269" key="6">
    <source>
    </source>
</evidence>
<evidence type="ECO:0000269" key="7">
    <source>
    </source>
</evidence>
<evidence type="ECO:0000269" key="8">
    <source>
    </source>
</evidence>
<evidence type="ECO:0000303" key="9">
    <source>
    </source>
</evidence>
<evidence type="ECO:0000303" key="10">
    <source>
    </source>
</evidence>
<evidence type="ECO:0000303" key="11">
    <source>
    </source>
</evidence>
<evidence type="ECO:0000303" key="12">
    <source>
    </source>
</evidence>
<evidence type="ECO:0000305" key="13"/>
<evidence type="ECO:0000312" key="14">
    <source>
        <dbReference type="HGNC" id="HGNC:23204"/>
    </source>
</evidence>
<evidence type="ECO:0007829" key="15">
    <source>
        <dbReference type="PDB" id="2CRY"/>
    </source>
</evidence>
<reference key="1">
    <citation type="journal article" date="2003" name="FASEB J.">
        <title>NEPH1 defines a novel family of podocin interacting proteins.</title>
        <authorList>
            <person name="Sellin L."/>
            <person name="Huber T.B."/>
            <person name="Gerke P."/>
            <person name="Quack I."/>
            <person name="Pavenstaedt H."/>
            <person name="Walz G."/>
        </authorList>
    </citation>
    <scope>NUCLEOTIDE SEQUENCE [MRNA] (ISOFORM 1)</scope>
    <scope>TISSUE SPECIFICITY</scope>
    <scope>INTERACTION WITH NPHS2</scope>
    <source>
        <tissue>Brain</tissue>
    </source>
</reference>
<reference key="2">
    <citation type="journal article" date="2001" name="DNA Res.">
        <title>Prediction of the coding sequences of unidentified human genes. XX. The complete sequences of 100 new cDNA clones from brain which code for large proteins in vitro.</title>
        <authorList>
            <person name="Nagase T."/>
            <person name="Nakayama M."/>
            <person name="Nakajima D."/>
            <person name="Kikuno R."/>
            <person name="Ohara O."/>
        </authorList>
    </citation>
    <scope>NUCLEOTIDE SEQUENCE [LARGE SCALE MRNA] (ISOFORM 1)</scope>
    <source>
        <tissue>Brain</tissue>
    </source>
</reference>
<reference key="3">
    <citation type="journal article" date="2003" name="Genome Res.">
        <title>The secreted protein discovery initiative (SPDI), a large-scale effort to identify novel human secreted and transmembrane proteins: a bioinformatics assessment.</title>
        <authorList>
            <person name="Clark H.F."/>
            <person name="Gurney A.L."/>
            <person name="Abaya E."/>
            <person name="Baker K."/>
            <person name="Baldwin D.T."/>
            <person name="Brush J."/>
            <person name="Chen J."/>
            <person name="Chow B."/>
            <person name="Chui C."/>
            <person name="Crowley C."/>
            <person name="Currell B."/>
            <person name="Deuel B."/>
            <person name="Dowd P."/>
            <person name="Eaton D."/>
            <person name="Foster J.S."/>
            <person name="Grimaldi C."/>
            <person name="Gu Q."/>
            <person name="Hass P.E."/>
            <person name="Heldens S."/>
            <person name="Huang A."/>
            <person name="Kim H.S."/>
            <person name="Klimowski L."/>
            <person name="Jin Y."/>
            <person name="Johnson S."/>
            <person name="Lee J."/>
            <person name="Lewis L."/>
            <person name="Liao D."/>
            <person name="Mark M.R."/>
            <person name="Robbie E."/>
            <person name="Sanchez C."/>
            <person name="Schoenfeld J."/>
            <person name="Seshagiri S."/>
            <person name="Simmons L."/>
            <person name="Singh J."/>
            <person name="Smith V."/>
            <person name="Stinson J."/>
            <person name="Vagts A."/>
            <person name="Vandlen R.L."/>
            <person name="Watanabe C."/>
            <person name="Wieand D."/>
            <person name="Woods K."/>
            <person name="Xie M.-H."/>
            <person name="Yansura D.G."/>
            <person name="Yi S."/>
            <person name="Yu G."/>
            <person name="Yuan J."/>
            <person name="Zhang M."/>
            <person name="Zhang Z."/>
            <person name="Goddard A.D."/>
            <person name="Wood W.I."/>
            <person name="Godowski P.J."/>
            <person name="Gray A.M."/>
        </authorList>
    </citation>
    <scope>NUCLEOTIDE SEQUENCE [LARGE SCALE MRNA] (ISOFORM 2)</scope>
    <scope>NUCLEOTIDE SEQUENCE [LARGE SCALE MRNA] OF 491-778 (ISOFORM 1)</scope>
</reference>
<reference key="4">
    <citation type="journal article" date="2004" name="Genome Res.">
        <title>The status, quality, and expansion of the NIH full-length cDNA project: the Mammalian Gene Collection (MGC).</title>
        <authorList>
            <consortium name="The MGC Project Team"/>
        </authorList>
    </citation>
    <scope>NUCLEOTIDE SEQUENCE [LARGE SCALE MRNA] (ISOFORM 1)</scope>
    <source>
        <tissue>Brain</tissue>
    </source>
</reference>
<reference key="5">
    <citation type="submission" date="2005-11" db="PDB data bank">
        <title>Solution structure of the fifth Ig-like domain of human kin of IRRE-like 3.</title>
        <authorList>
            <consortium name="RIKEN structural genomics initiative (RSGI)"/>
        </authorList>
    </citation>
    <scope>STRUCTURE BY NMR OF 413-521</scope>
</reference>
<reference key="6">
    <citation type="journal article" date="2014" name="BMC Physiol.">
        <title>Identification of novel Kirrel3 gene splice variants in adult human skeletal muscle.</title>
        <authorList>
            <person name="Durcan P.J."/>
            <person name="Conradie J.D."/>
            <person name="Van deVyver M."/>
            <person name="Myburgh K.H."/>
        </authorList>
    </citation>
    <scope>ALTERNATIVE SPLICING (ISOFORMS 1 AND 2)</scope>
    <scope>TISSUE SPECIFICITY</scope>
</reference>
<reference key="7">
    <citation type="journal article" date="2015" name="PLoS ONE">
        <title>Autism and intellectual disability-associated KIRREL3 interacts with neuronal proteins MAP1B and MYO16 with potential roles in neurodevelopment.</title>
        <authorList>
            <person name="Liu Y.F."/>
            <person name="Sowell S.M."/>
            <person name="Luo Y."/>
            <person name="Chaubey A."/>
            <person name="Cameron R.S."/>
            <person name="Kim H.G."/>
            <person name="Srivastava A.K."/>
        </authorList>
    </citation>
    <scope>INTERACTION WITH ATP1B1; MAP1B; MYO16; SHMT2 AND UFC1</scope>
</reference>
<reference key="8">
    <citation type="journal article" date="2008" name="Am. J. Hum. Genet.">
        <title>Alterations in CDH15 and KIRREL3 in patients with mild to severe intellectual disability.</title>
        <authorList>
            <person name="Bhalla K."/>
            <person name="Luo Y."/>
            <person name="Buchan T."/>
            <person name="Beachem M.A."/>
            <person name="Guzauskas G.F."/>
            <person name="Ladd S."/>
            <person name="Bratcher S.J."/>
            <person name="Schroer R.J."/>
            <person name="Balsamo J."/>
            <person name="DuPont B.R."/>
            <person name="Lilien J."/>
            <person name="Srivastava A.K."/>
        </authorList>
    </citation>
    <scope>VARIANTS TRP-40; GLN-336 AND PHE-731</scope>
    <scope>TISSUE SPECIFICITY</scope>
    <scope>SUBCELLULAR LOCATION</scope>
    <scope>INTERACTION WITH CASK</scope>
    <scope>CHROMOSOMAL TRANSLOCATION WITH CDH15</scope>
</reference>
<gene>
    <name evidence="14" type="primary">KIRREL3</name>
    <name evidence="9" type="synonym">KIAA1867</name>
    <name evidence="10" type="synonym">NEPH2</name>
    <name evidence="11" type="ORF">UNQ5923/PRO4502/PRO19814</name>
</gene>
<comment type="function">
    <text evidence="1">Synaptic adhesion molecule required for the formation of target-specific synapses. Required for formation of target-specific synapses at hippocampal mossy fiber synapses. Required for formation of mossy fiber filopodia, the synaptic structures connecting dentate granule and GABA neurons. Probably acts as a homophilic adhesion molecule that promotes trans-cellular interactions and stabilize mossy fiber filipodia contact and subsequent synapse formation. Required for the coalescence of vomeronasal sensory neuron axons. May be involved in the hematopoietic supportive capacity of stroma cells; the secreted extracellular domain is directly responsible for supporting hematopoietic stem cells.</text>
</comment>
<comment type="subunit">
    <text evidence="1 5 6 8">Homodimer; mediates homophilic interactions to promote cell adhesion. Interacts with NPHS1; forms heterodimers with NPHS1 (By similarity). Interacts with NPHS2/podocin (via the C-terminus) (PubMed:12424224). Interacts with CASK (PubMed:19012874). Interacts (via extracellular region) with MAP1B (PubMed:25902260). Interacts (via extracellular region) with MYO16 (PubMed:25902260). Interacts (via intracellular region) with ATP1B1 (PubMed:25902260). Interacts (via intracellular region) with SHMT2 (PubMed:25902260). Interacts (via intracellular region) with UFC1 (PubMed:25902260).</text>
</comment>
<comment type="interaction">
    <interactant intactId="EBI-16427312">
        <id>Q8IZU9</id>
    </interactant>
    <interactant intactId="EBI-714630">
        <id>P05026</id>
        <label>ATP1B1</label>
    </interactant>
    <organismsDiffer>false</organismsDiffer>
    <experiments>4</experiments>
</comment>
<comment type="interaction">
    <interactant intactId="EBI-16427312">
        <id>Q8IZU9</id>
    </interactant>
    <interactant intactId="EBI-1056902">
        <id>P15311</id>
        <label>EZR</label>
    </interactant>
    <organismsDiffer>false</organismsDiffer>
    <experiments>5</experiments>
</comment>
<comment type="interaction">
    <interactant intactId="EBI-16427312">
        <id>Q8IZU9</id>
    </interactant>
    <interactant intactId="EBI-9517186">
        <id>PRO_0000018605</id>
        <label>MAP1B</label>
        <dbReference type="UniProtKB" id="P46821"/>
    </interactant>
    <organismsDiffer>false</organismsDiffer>
    <experiments>4</experiments>
</comment>
<comment type="interaction">
    <interactant intactId="EBI-16427312">
        <id>Q8IZU9</id>
    </interactant>
    <interactant intactId="EBI-310686">
        <id>Q9Y6X6</id>
        <label>MYO16</label>
    </interactant>
    <organismsDiffer>false</organismsDiffer>
    <experiments>4</experiments>
</comment>
<comment type="interaction">
    <interactant intactId="EBI-16427312">
        <id>Q8IZU9</id>
    </interactant>
    <interactant intactId="EBI-2514878">
        <id>P35241</id>
        <label>RDX</label>
    </interactant>
    <organismsDiffer>false</organismsDiffer>
    <experiments>5</experiments>
</comment>
<comment type="interaction">
    <interactant intactId="EBI-16427312">
        <id>Q8IZU9</id>
    </interactant>
    <interactant intactId="EBI-352908">
        <id>P34897</id>
        <label>SHMT2</label>
    </interactant>
    <organismsDiffer>false</organismsDiffer>
    <experiments>4</experiments>
</comment>
<comment type="interaction">
    <interactant intactId="EBI-16427312">
        <id>Q8IZU9</id>
    </interactant>
    <interactant intactId="EBI-1045733">
        <id>Q9Y3C8</id>
        <label>UFC1</label>
    </interactant>
    <organismsDiffer>false</organismsDiffer>
    <experiments>4</experiments>
</comment>
<comment type="subcellular location">
    <subcellularLocation>
        <location evidence="6">Cell membrane</location>
        <topology evidence="6">Single-pass type I membrane protein</topology>
    </subcellularLocation>
</comment>
<comment type="subcellular location">
    <molecule>Processed kin of IRRE-like protein 3</molecule>
    <subcellularLocation>
        <location evidence="1">Secreted</location>
    </subcellularLocation>
</comment>
<comment type="alternative products">
    <event type="alternative splicing"/>
    <isoform>
        <id>Q8IZU9-1</id>
        <name>1</name>
        <name evidence="12">Kirrel3 A</name>
        <sequence type="displayed"/>
    </isoform>
    <isoform>
        <id>Q8IZU9-2</id>
        <name>2</name>
        <name evidence="12">Kirrel3 B</name>
        <sequence type="described" ref="VSP_011799 VSP_011800"/>
    </isoform>
</comment>
<comment type="tissue specificity">
    <text evidence="5 6 7">Expressed in fetal and adult brain (PubMed:19012874). Also expressed in kidney, specifically in podocytes of kidney glomeruli (PubMed:12424224). Also expressed in skeletal muscle (PubMed:25488023).</text>
</comment>
<comment type="PTM">
    <text evidence="1">Undergoes proteolysis by a metalloprotease and gives rise to a soluble form.</text>
</comment>
<comment type="disease">
    <text evidence="6">A chromosomal aberration involving KIRREL3 and CDH15 is found in a patient with severe intellectual disability and dysmorphic facial features. Translocation t(11;16)(q24.2;q24).</text>
</comment>
<comment type="similarity">
    <text evidence="13">Belongs to the immunoglobulin superfamily.</text>
</comment>
<comment type="sequence caution" evidence="13">
    <conflict type="erroneous initiation">
        <sequence resource="EMBL-CDS" id="AAQ89120"/>
    </conflict>
</comment>
<comment type="sequence caution" evidence="13">
    <conflict type="erroneous initiation">
        <sequence resource="EMBL-CDS" id="BAB47496"/>
    </conflict>
</comment>
<name>KIRR3_HUMAN</name>
<sequence>MKPFQLDLLFVCFFLFSQELGLQKRGCCLVLGYMAKDKFRRMNEGQVYSFSQQPQDQVVVSGQPVTLLCAIPEYDGFVLWIKDGLALGVGRDLSSYPQYLVVGNHLSGEHHLKILRAELQDDAVYECQAIQAAIRSRPARLTVLVPPDDPVILGGPVISLRAGDPLNLTCHADNAKPAASIIWLRKGEVINGATYSKTLLRDGKRESIVSTLFISPGDVENGQSIVCRATNKAIPGGKETSVTIDIQHPPLVNLSVEPQPVLEDNVVTFHCSAKANPAVTQYRWAKRGQIIKEASGEVYRTTVDYTYFSEPVSCEVTNALGSTNLSRTVDVYFGPRMTTEPQSLLVDLGSDAIFSCAWTGNPSLTIVWMKRGSGVVLSNEKTLTLKSVRQEDAGKYVCRAVVPRVGAGEREVTLTVNGPPIISSTQTQHALHGEKGQIKCFIRSTPPPDRIAWSWKENVLESGTSGRYTVETISTEEGVISTLTISNIVRADFQTIYNCTAWNSFGSDTEIIRLKEQGSEMKSGAGLEAESVPMAVIIGVAVGAGVAFLVLMATIVAFCCARSQRNLKGVVSAKNDIRVEIVHKEPASGREGEEHSTIKQLMMDRGEFQQDSVLKQLEVLKEEEKEFQNLKDPTNGYYSVNTFKEHHSTPTISLSSCQPDLRPAGKQRVPTGMSFTNIYSTLSGQGRLYDYGQRFVLGMGSSSIELCEREFQRGSLSDSSSFLDTQCDSSVSSSGKQDGYVQFDKASKASASSSHHSQSSSQNSDPSRPLQRRMQTHV</sequence>
<accession>Q8IZU9</accession>
<accession>Q3MIJ7</accession>
<accession>Q6UWJ9</accession>
<accession>Q6UWL5</accession>
<accession>Q96JG0</accession>
<organism>
    <name type="scientific">Homo sapiens</name>
    <name type="common">Human</name>
    <dbReference type="NCBI Taxonomy" id="9606"/>
    <lineage>
        <taxon>Eukaryota</taxon>
        <taxon>Metazoa</taxon>
        <taxon>Chordata</taxon>
        <taxon>Craniata</taxon>
        <taxon>Vertebrata</taxon>
        <taxon>Euteleostomi</taxon>
        <taxon>Mammalia</taxon>
        <taxon>Eutheria</taxon>
        <taxon>Euarchontoglires</taxon>
        <taxon>Primates</taxon>
        <taxon>Haplorrhini</taxon>
        <taxon>Catarrhini</taxon>
        <taxon>Hominidae</taxon>
        <taxon>Homo</taxon>
    </lineage>
</organism>